<feature type="chain" id="PRO_1000098570" description="Threonine--tRNA ligase">
    <location>
        <begin position="1"/>
        <end position="642"/>
    </location>
</feature>
<feature type="domain" description="TGS" evidence="2">
    <location>
        <begin position="1"/>
        <end position="61"/>
    </location>
</feature>
<feature type="region of interest" description="Catalytic" evidence="1">
    <location>
        <begin position="243"/>
        <end position="534"/>
    </location>
</feature>
<feature type="binding site" evidence="1">
    <location>
        <position position="334"/>
    </location>
    <ligand>
        <name>Zn(2+)</name>
        <dbReference type="ChEBI" id="CHEBI:29105"/>
    </ligand>
</feature>
<feature type="binding site" evidence="1">
    <location>
        <position position="385"/>
    </location>
    <ligand>
        <name>Zn(2+)</name>
        <dbReference type="ChEBI" id="CHEBI:29105"/>
    </ligand>
</feature>
<feature type="binding site" evidence="1">
    <location>
        <position position="511"/>
    </location>
    <ligand>
        <name>Zn(2+)</name>
        <dbReference type="ChEBI" id="CHEBI:29105"/>
    </ligand>
</feature>
<feature type="modified residue" description="N6-acetyllysine" evidence="1">
    <location>
        <position position="286"/>
    </location>
</feature>
<protein>
    <recommendedName>
        <fullName evidence="1">Threonine--tRNA ligase</fullName>
        <ecNumber evidence="1">6.1.1.3</ecNumber>
    </recommendedName>
    <alternativeName>
        <fullName evidence="1">Threonyl-tRNA synthetase</fullName>
        <shortName evidence="1">ThrRS</shortName>
    </alternativeName>
</protein>
<reference key="1">
    <citation type="journal article" date="2008" name="DNA Res.">
        <title>Complete genome sequence and comparative analysis of the wild-type commensal Escherichia coli strain SE11 isolated from a healthy adult.</title>
        <authorList>
            <person name="Oshima K."/>
            <person name="Toh H."/>
            <person name="Ogura Y."/>
            <person name="Sasamoto H."/>
            <person name="Morita H."/>
            <person name="Park S.-H."/>
            <person name="Ooka T."/>
            <person name="Iyoda S."/>
            <person name="Taylor T.D."/>
            <person name="Hayashi T."/>
            <person name="Itoh K."/>
            <person name="Hattori M."/>
        </authorList>
    </citation>
    <scope>NUCLEOTIDE SEQUENCE [LARGE SCALE GENOMIC DNA]</scope>
    <source>
        <strain>SE11</strain>
    </source>
</reference>
<accession>B6IBD7</accession>
<gene>
    <name evidence="1" type="primary">thrS</name>
    <name type="ordered locus">ECSE_1887</name>
</gene>
<keyword id="KW-0007">Acetylation</keyword>
<keyword id="KW-0030">Aminoacyl-tRNA synthetase</keyword>
<keyword id="KW-0067">ATP-binding</keyword>
<keyword id="KW-0963">Cytoplasm</keyword>
<keyword id="KW-0436">Ligase</keyword>
<keyword id="KW-0479">Metal-binding</keyword>
<keyword id="KW-0547">Nucleotide-binding</keyword>
<keyword id="KW-0648">Protein biosynthesis</keyword>
<keyword id="KW-0694">RNA-binding</keyword>
<keyword id="KW-0820">tRNA-binding</keyword>
<keyword id="KW-0862">Zinc</keyword>
<sequence>MPVITLPDGSQRHYDHAVSPMDVALDIGPGLAKACIAGRVNGELVDACDLIENDAQLSIITAKDEDGLEIIRHSCAHLLGHAIKQLWPHTKMAIGPVIDNGFYYDVDLDRTLTQEDVEALEKRMHELAEKNYDVIKKKVSWHEARETFANRGESYKVSILDENIAHDDKPGLYFHEEYVDMCRGPHVPNMRFCHHFKLMKTAGAYWRGDSNNKMLQRIYGTAWADKKALNAYLQRLEEAAKRDHRKIGKQLDLYHMQEEAPGMVFWHNDGWTIFRELEVFVRSKLKEYQYQEVKGPFMMDRVLWEKTGHWDNYKDAMFTTSSENREYCIKPMNCPGHVQIFNQGLKSYRDLPLRMAEFGSCHRNEPSGSLHGLMRVRGFTQDDAHIFCTEEQIRDEVNGCIRLVYDMYSTFGFEKIVVKLSTRPEKRIGSDEMWDRAEADLAVALEENNIPFEYQLGEGAFYGPKIEFTLYDCLDRAWQCGTVQLDFSLPSRLSASYVGEDNERKVPVMIHRAILGSMERFIGILTEEFAGFFPTWLAPVQVVIMNITDSQSDYVNELTQKLSNAGIRVKADLRNEKIGFKIREHTLRRVPYMLVCGDKEVESGKVAVRTRRGKDLGSMDVNEVIEKLQQEIRSRSLKQLEE</sequence>
<evidence type="ECO:0000255" key="1">
    <source>
        <dbReference type="HAMAP-Rule" id="MF_00184"/>
    </source>
</evidence>
<evidence type="ECO:0000255" key="2">
    <source>
        <dbReference type="PROSITE-ProRule" id="PRU01228"/>
    </source>
</evidence>
<organism>
    <name type="scientific">Escherichia coli (strain SE11)</name>
    <dbReference type="NCBI Taxonomy" id="409438"/>
    <lineage>
        <taxon>Bacteria</taxon>
        <taxon>Pseudomonadati</taxon>
        <taxon>Pseudomonadota</taxon>
        <taxon>Gammaproteobacteria</taxon>
        <taxon>Enterobacterales</taxon>
        <taxon>Enterobacteriaceae</taxon>
        <taxon>Escherichia</taxon>
    </lineage>
</organism>
<comment type="function">
    <text evidence="1">Catalyzes the attachment of threonine to tRNA(Thr) in a two-step reaction: L-threonine is first activated by ATP to form Thr-AMP and then transferred to the acceptor end of tRNA(Thr). Also edits incorrectly charged L-seryl-tRNA(Thr).</text>
</comment>
<comment type="catalytic activity">
    <reaction evidence="1">
        <text>tRNA(Thr) + L-threonine + ATP = L-threonyl-tRNA(Thr) + AMP + diphosphate + H(+)</text>
        <dbReference type="Rhea" id="RHEA:24624"/>
        <dbReference type="Rhea" id="RHEA-COMP:9670"/>
        <dbReference type="Rhea" id="RHEA-COMP:9704"/>
        <dbReference type="ChEBI" id="CHEBI:15378"/>
        <dbReference type="ChEBI" id="CHEBI:30616"/>
        <dbReference type="ChEBI" id="CHEBI:33019"/>
        <dbReference type="ChEBI" id="CHEBI:57926"/>
        <dbReference type="ChEBI" id="CHEBI:78442"/>
        <dbReference type="ChEBI" id="CHEBI:78534"/>
        <dbReference type="ChEBI" id="CHEBI:456215"/>
        <dbReference type="EC" id="6.1.1.3"/>
    </reaction>
</comment>
<comment type="cofactor">
    <cofactor evidence="1">
        <name>Zn(2+)</name>
        <dbReference type="ChEBI" id="CHEBI:29105"/>
    </cofactor>
    <text evidence="1">Binds 1 zinc ion per subunit.</text>
</comment>
<comment type="subunit">
    <text evidence="1">Homodimer.</text>
</comment>
<comment type="subcellular location">
    <subcellularLocation>
        <location evidence="1">Cytoplasm</location>
    </subcellularLocation>
</comment>
<comment type="similarity">
    <text evidence="1">Belongs to the class-II aminoacyl-tRNA synthetase family.</text>
</comment>
<name>SYT_ECOSE</name>
<proteinExistence type="inferred from homology"/>
<dbReference type="EC" id="6.1.1.3" evidence="1"/>
<dbReference type="EMBL" id="AP009240">
    <property type="protein sequence ID" value="BAG77411.1"/>
    <property type="molecule type" value="Genomic_DNA"/>
</dbReference>
<dbReference type="RefSeq" id="WP_001144190.1">
    <property type="nucleotide sequence ID" value="NC_011415.1"/>
</dbReference>
<dbReference type="SMR" id="B6IBD7"/>
<dbReference type="GeneID" id="75205636"/>
<dbReference type="KEGG" id="ecy:ECSE_1887"/>
<dbReference type="HOGENOM" id="CLU_008554_0_1_6"/>
<dbReference type="Proteomes" id="UP000008199">
    <property type="component" value="Chromosome"/>
</dbReference>
<dbReference type="GO" id="GO:0005829">
    <property type="term" value="C:cytosol"/>
    <property type="evidence" value="ECO:0007669"/>
    <property type="project" value="TreeGrafter"/>
</dbReference>
<dbReference type="GO" id="GO:0005524">
    <property type="term" value="F:ATP binding"/>
    <property type="evidence" value="ECO:0007669"/>
    <property type="project" value="UniProtKB-UniRule"/>
</dbReference>
<dbReference type="GO" id="GO:0046872">
    <property type="term" value="F:metal ion binding"/>
    <property type="evidence" value="ECO:0007669"/>
    <property type="project" value="UniProtKB-KW"/>
</dbReference>
<dbReference type="GO" id="GO:0004829">
    <property type="term" value="F:threonine-tRNA ligase activity"/>
    <property type="evidence" value="ECO:0007669"/>
    <property type="project" value="UniProtKB-UniRule"/>
</dbReference>
<dbReference type="GO" id="GO:0000049">
    <property type="term" value="F:tRNA binding"/>
    <property type="evidence" value="ECO:0007669"/>
    <property type="project" value="UniProtKB-KW"/>
</dbReference>
<dbReference type="GO" id="GO:0006435">
    <property type="term" value="P:threonyl-tRNA aminoacylation"/>
    <property type="evidence" value="ECO:0007669"/>
    <property type="project" value="UniProtKB-UniRule"/>
</dbReference>
<dbReference type="CDD" id="cd01667">
    <property type="entry name" value="TGS_ThrRS"/>
    <property type="match status" value="1"/>
</dbReference>
<dbReference type="CDD" id="cd00860">
    <property type="entry name" value="ThrRS_anticodon"/>
    <property type="match status" value="1"/>
</dbReference>
<dbReference type="CDD" id="cd00771">
    <property type="entry name" value="ThrRS_core"/>
    <property type="match status" value="1"/>
</dbReference>
<dbReference type="FunFam" id="3.10.20.30:FF:000005">
    <property type="entry name" value="Threonine--tRNA ligase"/>
    <property type="match status" value="1"/>
</dbReference>
<dbReference type="FunFam" id="3.30.54.20:FF:000002">
    <property type="entry name" value="Threonine--tRNA ligase"/>
    <property type="match status" value="1"/>
</dbReference>
<dbReference type="FunFam" id="3.30.930.10:FF:000002">
    <property type="entry name" value="Threonine--tRNA ligase"/>
    <property type="match status" value="1"/>
</dbReference>
<dbReference type="FunFam" id="3.40.50.800:FF:000001">
    <property type="entry name" value="Threonine--tRNA ligase"/>
    <property type="match status" value="1"/>
</dbReference>
<dbReference type="FunFam" id="3.30.980.10:FF:000005">
    <property type="entry name" value="Threonyl-tRNA synthetase, mitochondrial"/>
    <property type="match status" value="1"/>
</dbReference>
<dbReference type="Gene3D" id="3.10.20.30">
    <property type="match status" value="1"/>
</dbReference>
<dbReference type="Gene3D" id="3.30.54.20">
    <property type="match status" value="1"/>
</dbReference>
<dbReference type="Gene3D" id="3.40.50.800">
    <property type="entry name" value="Anticodon-binding domain"/>
    <property type="match status" value="1"/>
</dbReference>
<dbReference type="Gene3D" id="3.30.930.10">
    <property type="entry name" value="Bira Bifunctional Protein, Domain 2"/>
    <property type="match status" value="1"/>
</dbReference>
<dbReference type="Gene3D" id="3.30.980.10">
    <property type="entry name" value="Threonyl-trna Synthetase, Chain A, domain 2"/>
    <property type="match status" value="1"/>
</dbReference>
<dbReference type="HAMAP" id="MF_00184">
    <property type="entry name" value="Thr_tRNA_synth"/>
    <property type="match status" value="1"/>
</dbReference>
<dbReference type="InterPro" id="IPR002314">
    <property type="entry name" value="aa-tRNA-synt_IIb"/>
</dbReference>
<dbReference type="InterPro" id="IPR006195">
    <property type="entry name" value="aa-tRNA-synth_II"/>
</dbReference>
<dbReference type="InterPro" id="IPR045864">
    <property type="entry name" value="aa-tRNA-synth_II/BPL/LPL"/>
</dbReference>
<dbReference type="InterPro" id="IPR004154">
    <property type="entry name" value="Anticodon-bd"/>
</dbReference>
<dbReference type="InterPro" id="IPR036621">
    <property type="entry name" value="Anticodon-bd_dom_sf"/>
</dbReference>
<dbReference type="InterPro" id="IPR012675">
    <property type="entry name" value="Beta-grasp_dom_sf"/>
</dbReference>
<dbReference type="InterPro" id="IPR004095">
    <property type="entry name" value="TGS"/>
</dbReference>
<dbReference type="InterPro" id="IPR012676">
    <property type="entry name" value="TGS-like"/>
</dbReference>
<dbReference type="InterPro" id="IPR002320">
    <property type="entry name" value="Thr-tRNA-ligase_IIa"/>
</dbReference>
<dbReference type="InterPro" id="IPR018163">
    <property type="entry name" value="Thr/Ala-tRNA-synth_IIc_edit"/>
</dbReference>
<dbReference type="InterPro" id="IPR047246">
    <property type="entry name" value="ThrRS_anticodon"/>
</dbReference>
<dbReference type="InterPro" id="IPR033728">
    <property type="entry name" value="ThrRS_core"/>
</dbReference>
<dbReference type="InterPro" id="IPR012947">
    <property type="entry name" value="tRNA_SAD"/>
</dbReference>
<dbReference type="NCBIfam" id="TIGR00418">
    <property type="entry name" value="thrS"/>
    <property type="match status" value="1"/>
</dbReference>
<dbReference type="PANTHER" id="PTHR11451:SF44">
    <property type="entry name" value="THREONINE--TRNA LIGASE, CHLOROPLASTIC_MITOCHONDRIAL 2"/>
    <property type="match status" value="1"/>
</dbReference>
<dbReference type="PANTHER" id="PTHR11451">
    <property type="entry name" value="THREONINE-TRNA LIGASE"/>
    <property type="match status" value="1"/>
</dbReference>
<dbReference type="Pfam" id="PF03129">
    <property type="entry name" value="HGTP_anticodon"/>
    <property type="match status" value="1"/>
</dbReference>
<dbReference type="Pfam" id="PF02824">
    <property type="entry name" value="TGS"/>
    <property type="match status" value="1"/>
</dbReference>
<dbReference type="Pfam" id="PF00587">
    <property type="entry name" value="tRNA-synt_2b"/>
    <property type="match status" value="1"/>
</dbReference>
<dbReference type="Pfam" id="PF07973">
    <property type="entry name" value="tRNA_SAD"/>
    <property type="match status" value="1"/>
</dbReference>
<dbReference type="PRINTS" id="PR01047">
    <property type="entry name" value="TRNASYNTHTHR"/>
</dbReference>
<dbReference type="SMART" id="SM00863">
    <property type="entry name" value="tRNA_SAD"/>
    <property type="match status" value="1"/>
</dbReference>
<dbReference type="SUPFAM" id="SSF52954">
    <property type="entry name" value="Class II aaRS ABD-related"/>
    <property type="match status" value="1"/>
</dbReference>
<dbReference type="SUPFAM" id="SSF55681">
    <property type="entry name" value="Class II aaRS and biotin synthetases"/>
    <property type="match status" value="1"/>
</dbReference>
<dbReference type="SUPFAM" id="SSF81271">
    <property type="entry name" value="TGS-like"/>
    <property type="match status" value="1"/>
</dbReference>
<dbReference type="SUPFAM" id="SSF55186">
    <property type="entry name" value="ThrRS/AlaRS common domain"/>
    <property type="match status" value="1"/>
</dbReference>
<dbReference type="PROSITE" id="PS50862">
    <property type="entry name" value="AA_TRNA_LIGASE_II"/>
    <property type="match status" value="1"/>
</dbReference>
<dbReference type="PROSITE" id="PS51880">
    <property type="entry name" value="TGS"/>
    <property type="match status" value="1"/>
</dbReference>